<evidence type="ECO:0000250" key="1"/>
<evidence type="ECO:0000255" key="2"/>
<evidence type="ECO:0000269" key="3">
    <source>
    </source>
</evidence>
<evidence type="ECO:0000305" key="4"/>
<gene>
    <name type="primary">ND3</name>
    <name type="synonym">NAD3</name>
</gene>
<reference key="1">
    <citation type="journal article" date="1990" name="EMBO J.">
        <title>Transcripts of the NADH-dehydrogenase subunit 3 gene are differentially edited in Oenothera mitochondria.</title>
        <authorList>
            <person name="Schuster W."/>
            <person name="Wissinger B."/>
            <person name="Unseld M."/>
            <person name="Brennicke A."/>
        </authorList>
    </citation>
    <scope>NUCLEOTIDE SEQUENCE [GENOMIC DNA / MRNA]</scope>
    <scope>RNA EDITING</scope>
    <source>
        <strain>cv. Munzia</strain>
    </source>
</reference>
<geneLocation type="mitochondrion"/>
<organism>
    <name type="scientific">Oenothera berteroana</name>
    <name type="common">Bertero's evening primrose</name>
    <dbReference type="NCBI Taxonomy" id="3950"/>
    <lineage>
        <taxon>Eukaryota</taxon>
        <taxon>Viridiplantae</taxon>
        <taxon>Streptophyta</taxon>
        <taxon>Embryophyta</taxon>
        <taxon>Tracheophyta</taxon>
        <taxon>Spermatophyta</taxon>
        <taxon>Magnoliopsida</taxon>
        <taxon>eudicotyledons</taxon>
        <taxon>Gunneridae</taxon>
        <taxon>Pentapetalae</taxon>
        <taxon>rosids</taxon>
        <taxon>malvids</taxon>
        <taxon>Myrtales</taxon>
        <taxon>Onagraceae</taxon>
        <taxon>Onagroideae</taxon>
        <taxon>Onagreae</taxon>
        <taxon>Oenothera</taxon>
    </lineage>
</organism>
<protein>
    <recommendedName>
        <fullName>NADH-ubiquinone oxidoreductase chain 3</fullName>
        <ecNumber>7.1.1.2</ecNumber>
    </recommendedName>
    <alternativeName>
        <fullName>NADH dehydrogenase subunit 3</fullName>
    </alternativeName>
</protein>
<proteinExistence type="evidence at transcript level"/>
<name>NU3M_OENBE</name>
<dbReference type="EC" id="7.1.1.2"/>
<dbReference type="EMBL" id="X52199">
    <property type="protein sequence ID" value="CAA36452.1"/>
    <property type="status" value="ALT_SEQ"/>
    <property type="molecule type" value="Genomic_DNA"/>
</dbReference>
<dbReference type="EMBL" id="X52200">
    <property type="protein sequence ID" value="CAA36454.1"/>
    <property type="molecule type" value="mRNA"/>
</dbReference>
<dbReference type="SMR" id="P18630"/>
<dbReference type="GO" id="GO:0031966">
    <property type="term" value="C:mitochondrial membrane"/>
    <property type="evidence" value="ECO:0007669"/>
    <property type="project" value="UniProtKB-SubCell"/>
</dbReference>
<dbReference type="GO" id="GO:0030964">
    <property type="term" value="C:NADH dehydrogenase complex"/>
    <property type="evidence" value="ECO:0007669"/>
    <property type="project" value="TreeGrafter"/>
</dbReference>
<dbReference type="GO" id="GO:0008137">
    <property type="term" value="F:NADH dehydrogenase (ubiquinone) activity"/>
    <property type="evidence" value="ECO:0007669"/>
    <property type="project" value="UniProtKB-EC"/>
</dbReference>
<dbReference type="FunFam" id="1.20.58.1610:FF:000006">
    <property type="entry name" value="NADH-ubiquinone oxidoreductase chain 3"/>
    <property type="match status" value="1"/>
</dbReference>
<dbReference type="Gene3D" id="1.20.58.1610">
    <property type="entry name" value="NADH:ubiquinone/plastoquinone oxidoreductase, chain 3"/>
    <property type="match status" value="1"/>
</dbReference>
<dbReference type="HAMAP" id="MF_01394">
    <property type="entry name" value="NDH1_NuoA"/>
    <property type="match status" value="1"/>
</dbReference>
<dbReference type="InterPro" id="IPR023043">
    <property type="entry name" value="NAD(P)H_OxRDtase_bac/plastid"/>
</dbReference>
<dbReference type="InterPro" id="IPR000440">
    <property type="entry name" value="NADH_UbQ/plastoQ_OxRdtase_su3"/>
</dbReference>
<dbReference type="InterPro" id="IPR038430">
    <property type="entry name" value="NDAH_ubi_oxred_su3_sf"/>
</dbReference>
<dbReference type="PANTHER" id="PTHR11058">
    <property type="entry name" value="NADH-UBIQUINONE OXIDOREDUCTASE CHAIN 3"/>
    <property type="match status" value="1"/>
</dbReference>
<dbReference type="PANTHER" id="PTHR11058:SF9">
    <property type="entry name" value="NADH-UBIQUINONE OXIDOREDUCTASE CHAIN 3"/>
    <property type="match status" value="1"/>
</dbReference>
<dbReference type="Pfam" id="PF00507">
    <property type="entry name" value="Oxidored_q4"/>
    <property type="match status" value="1"/>
</dbReference>
<keyword id="KW-0249">Electron transport</keyword>
<keyword id="KW-0472">Membrane</keyword>
<keyword id="KW-0496">Mitochondrion</keyword>
<keyword id="KW-0520">NAD</keyword>
<keyword id="KW-0679">Respiratory chain</keyword>
<keyword id="KW-0691">RNA editing</keyword>
<keyword id="KW-1278">Translocase</keyword>
<keyword id="KW-0812">Transmembrane</keyword>
<keyword id="KW-1133">Transmembrane helix</keyword>
<keyword id="KW-0813">Transport</keyword>
<keyword id="KW-0830">Ubiquinone</keyword>
<feature type="chain" id="PRO_0000117774" description="NADH-ubiquinone oxidoreductase chain 3">
    <location>
        <begin position="1"/>
        <end position="118"/>
    </location>
</feature>
<feature type="transmembrane region" description="Helical" evidence="2">
    <location>
        <begin position="7"/>
        <end position="27"/>
    </location>
</feature>
<feature type="transmembrane region" description="Helical" evidence="2">
    <location>
        <begin position="62"/>
        <end position="82"/>
    </location>
</feature>
<feature type="transmembrane region" description="Helical" evidence="2">
    <location>
        <begin position="87"/>
        <end position="107"/>
    </location>
</feature>
<sequence>MLEFAPICISLVISLLLSLILLVVPFLFSSNSSTYPEKLSAYECGFDPFGDARSRFDIRFYLVSILFIIFDLEVTFFFPWAVSFNKIDLFGFWSMMAFLLILTIGFLYEWKRGALDWE</sequence>
<comment type="function">
    <text evidence="1">Core subunit of the mitochondrial membrane respiratory chain NADH dehydrogenase (Complex I) that is believed to belong to the minimal assembly required for catalysis. Complex I functions in the transfer of electrons from NADH to the respiratory chain. The immediate electron acceptor for the enzyme is believed to be ubiquinone (By similarity).</text>
</comment>
<comment type="catalytic activity">
    <reaction>
        <text>a ubiquinone + NADH + 5 H(+)(in) = a ubiquinol + NAD(+) + 4 H(+)(out)</text>
        <dbReference type="Rhea" id="RHEA:29091"/>
        <dbReference type="Rhea" id="RHEA-COMP:9565"/>
        <dbReference type="Rhea" id="RHEA-COMP:9566"/>
        <dbReference type="ChEBI" id="CHEBI:15378"/>
        <dbReference type="ChEBI" id="CHEBI:16389"/>
        <dbReference type="ChEBI" id="CHEBI:17976"/>
        <dbReference type="ChEBI" id="CHEBI:57540"/>
        <dbReference type="ChEBI" id="CHEBI:57945"/>
        <dbReference type="EC" id="7.1.1.2"/>
    </reaction>
</comment>
<comment type="subcellular location">
    <subcellularLocation>
        <location evidence="1">Mitochondrion membrane</location>
        <topology evidence="1">Multi-pass membrane protein</topology>
    </subcellularLocation>
</comment>
<comment type="RNA editing">
    <location>
        <position position="2" evidence="3"/>
    </location>
    <location>
        <position position="15" evidence="3"/>
    </location>
    <location>
        <position position="49" evidence="3"/>
    </location>
    <location>
        <position position="70" evidence="3"/>
    </location>
    <location>
        <position position="72" evidence="3"/>
    </location>
    <location>
        <position position="83" evidence="3"/>
    </location>
    <location>
        <position position="84" evidence="3"/>
    </location>
    <location>
        <position position="89" evidence="3"/>
    </location>
    <location>
        <position position="92" evidence="3"/>
    </location>
    <location>
        <position position="106" evidence="3"/>
    </location>
    <location>
        <position position="115" evidence="3"/>
    </location>
    <location>
        <position position="117" evidence="3"/>
    </location>
</comment>
<comment type="similarity">
    <text evidence="4">Belongs to the complex I subunit 3 family.</text>
</comment>
<accession>P18630</accession>